<reference key="1">
    <citation type="journal article" date="2003" name="Genome Res.">
        <title>Tropheryma whipplei twist: a human pathogenic Actinobacteria with a reduced genome.</title>
        <authorList>
            <person name="Raoult D."/>
            <person name="Ogata H."/>
            <person name="Audic S."/>
            <person name="Robert C."/>
            <person name="Suhre K."/>
            <person name="Drancourt M."/>
            <person name="Claverie J.-M."/>
        </authorList>
    </citation>
    <scope>NUCLEOTIDE SEQUENCE [LARGE SCALE GENOMIC DNA]</scope>
    <source>
        <strain>Twist</strain>
    </source>
</reference>
<sequence>MVPPQRAKNDTSSAPDSAAETRGPLVSSGSGLGRRKSATARVYLSPGEGVFVVNGRDINEYFTSKLHRQFACQPLKILDLLGSYDVKVTLHGGGASGQAGAVRLGIARALNTIDPENNRKPLKSAGFLTRDSRVKERKKAGLKKARKAPQYSKR</sequence>
<evidence type="ECO:0000255" key="1">
    <source>
        <dbReference type="HAMAP-Rule" id="MF_00532"/>
    </source>
</evidence>
<evidence type="ECO:0000256" key="2">
    <source>
        <dbReference type="SAM" id="MobiDB-lite"/>
    </source>
</evidence>
<evidence type="ECO:0000305" key="3"/>
<protein>
    <recommendedName>
        <fullName evidence="1">Small ribosomal subunit protein uS9</fullName>
    </recommendedName>
    <alternativeName>
        <fullName evidence="3">30S ribosomal protein S9</fullName>
    </alternativeName>
</protein>
<keyword id="KW-1185">Reference proteome</keyword>
<keyword id="KW-0687">Ribonucleoprotein</keyword>
<keyword id="KW-0689">Ribosomal protein</keyword>
<name>RS9_TROWT</name>
<accession>Q83GU6</accession>
<proteinExistence type="inferred from homology"/>
<feature type="chain" id="PRO_0000111435" description="Small ribosomal subunit protein uS9">
    <location>
        <begin position="1"/>
        <end position="154"/>
    </location>
</feature>
<feature type="region of interest" description="Disordered" evidence="2">
    <location>
        <begin position="1"/>
        <end position="33"/>
    </location>
</feature>
<feature type="region of interest" description="Disordered" evidence="2">
    <location>
        <begin position="115"/>
        <end position="154"/>
    </location>
</feature>
<feature type="compositionally biased region" description="Basic residues" evidence="2">
    <location>
        <begin position="135"/>
        <end position="154"/>
    </location>
</feature>
<comment type="similarity">
    <text evidence="1">Belongs to the universal ribosomal protein uS9 family.</text>
</comment>
<dbReference type="EMBL" id="AE014184">
    <property type="protein sequence ID" value="AAO44242.1"/>
    <property type="molecule type" value="Genomic_DNA"/>
</dbReference>
<dbReference type="RefSeq" id="WP_011096115.1">
    <property type="nucleotide sequence ID" value="NC_004572.3"/>
</dbReference>
<dbReference type="SMR" id="Q83GU6"/>
<dbReference type="STRING" id="203267.TWT_145"/>
<dbReference type="GeneID" id="67387928"/>
<dbReference type="KEGG" id="twh:TWT_145"/>
<dbReference type="eggNOG" id="COG0103">
    <property type="taxonomic scope" value="Bacteria"/>
</dbReference>
<dbReference type="HOGENOM" id="CLU_046483_2_0_11"/>
<dbReference type="OrthoDB" id="9803965at2"/>
<dbReference type="Proteomes" id="UP000002200">
    <property type="component" value="Chromosome"/>
</dbReference>
<dbReference type="GO" id="GO:0005737">
    <property type="term" value="C:cytoplasm"/>
    <property type="evidence" value="ECO:0007669"/>
    <property type="project" value="UniProtKB-ARBA"/>
</dbReference>
<dbReference type="GO" id="GO:0015935">
    <property type="term" value="C:small ribosomal subunit"/>
    <property type="evidence" value="ECO:0007669"/>
    <property type="project" value="TreeGrafter"/>
</dbReference>
<dbReference type="GO" id="GO:0003723">
    <property type="term" value="F:RNA binding"/>
    <property type="evidence" value="ECO:0007669"/>
    <property type="project" value="TreeGrafter"/>
</dbReference>
<dbReference type="GO" id="GO:0003735">
    <property type="term" value="F:structural constituent of ribosome"/>
    <property type="evidence" value="ECO:0007669"/>
    <property type="project" value="InterPro"/>
</dbReference>
<dbReference type="GO" id="GO:0006412">
    <property type="term" value="P:translation"/>
    <property type="evidence" value="ECO:0007669"/>
    <property type="project" value="UniProtKB-UniRule"/>
</dbReference>
<dbReference type="FunFam" id="3.30.230.10:FF:000001">
    <property type="entry name" value="30S ribosomal protein S9"/>
    <property type="match status" value="1"/>
</dbReference>
<dbReference type="Gene3D" id="3.30.230.10">
    <property type="match status" value="1"/>
</dbReference>
<dbReference type="HAMAP" id="MF_00532_B">
    <property type="entry name" value="Ribosomal_uS9_B"/>
    <property type="match status" value="1"/>
</dbReference>
<dbReference type="InterPro" id="IPR020568">
    <property type="entry name" value="Ribosomal_Su5_D2-typ_SF"/>
</dbReference>
<dbReference type="InterPro" id="IPR000754">
    <property type="entry name" value="Ribosomal_uS9"/>
</dbReference>
<dbReference type="InterPro" id="IPR023035">
    <property type="entry name" value="Ribosomal_uS9_bac/plastid"/>
</dbReference>
<dbReference type="InterPro" id="IPR020574">
    <property type="entry name" value="Ribosomal_uS9_CS"/>
</dbReference>
<dbReference type="InterPro" id="IPR014721">
    <property type="entry name" value="Ribsml_uS5_D2-typ_fold_subgr"/>
</dbReference>
<dbReference type="NCBIfam" id="NF001099">
    <property type="entry name" value="PRK00132.1"/>
    <property type="match status" value="1"/>
</dbReference>
<dbReference type="PANTHER" id="PTHR21569">
    <property type="entry name" value="RIBOSOMAL PROTEIN S9"/>
    <property type="match status" value="1"/>
</dbReference>
<dbReference type="PANTHER" id="PTHR21569:SF1">
    <property type="entry name" value="SMALL RIBOSOMAL SUBUNIT PROTEIN US9M"/>
    <property type="match status" value="1"/>
</dbReference>
<dbReference type="Pfam" id="PF00380">
    <property type="entry name" value="Ribosomal_S9"/>
    <property type="match status" value="1"/>
</dbReference>
<dbReference type="SUPFAM" id="SSF54211">
    <property type="entry name" value="Ribosomal protein S5 domain 2-like"/>
    <property type="match status" value="1"/>
</dbReference>
<dbReference type="PROSITE" id="PS00360">
    <property type="entry name" value="RIBOSOMAL_S9"/>
    <property type="match status" value="1"/>
</dbReference>
<gene>
    <name evidence="1" type="primary">rpsI</name>
    <name type="ordered locus">TWT_145</name>
</gene>
<organism>
    <name type="scientific">Tropheryma whipplei (strain Twist)</name>
    <name type="common">Whipple's bacillus</name>
    <dbReference type="NCBI Taxonomy" id="203267"/>
    <lineage>
        <taxon>Bacteria</taxon>
        <taxon>Bacillati</taxon>
        <taxon>Actinomycetota</taxon>
        <taxon>Actinomycetes</taxon>
        <taxon>Micrococcales</taxon>
        <taxon>Tropherymataceae</taxon>
        <taxon>Tropheryma</taxon>
    </lineage>
</organism>